<name>FADJ_YERPS</name>
<evidence type="ECO:0000255" key="1">
    <source>
        <dbReference type="HAMAP-Rule" id="MF_01617"/>
    </source>
</evidence>
<evidence type="ECO:0000256" key="2">
    <source>
        <dbReference type="SAM" id="MobiDB-lite"/>
    </source>
</evidence>
<evidence type="ECO:0000305" key="3"/>
<feature type="chain" id="PRO_0000109316" description="Fatty acid oxidation complex subunit alpha">
    <location>
        <begin position="1"/>
        <end position="753"/>
    </location>
</feature>
<feature type="region of interest" description="Enoyl-CoA hydratase" evidence="1">
    <location>
        <begin position="8"/>
        <end position="197"/>
    </location>
</feature>
<feature type="region of interest" description="3-hydroxyacyl-CoA dehydrogenase" evidence="1">
    <location>
        <begin position="313"/>
        <end position="747"/>
    </location>
</feature>
<feature type="region of interest" description="Disordered" evidence="2">
    <location>
        <begin position="593"/>
        <end position="622"/>
    </location>
</feature>
<feature type="compositionally biased region" description="Low complexity" evidence="2">
    <location>
        <begin position="599"/>
        <end position="614"/>
    </location>
</feature>
<feature type="site" description="Important for catalytic activity" evidence="1">
    <location>
        <position position="125"/>
    </location>
</feature>
<feature type="site" description="Important for catalytic activity" evidence="1">
    <location>
        <position position="147"/>
    </location>
</feature>
<protein>
    <recommendedName>
        <fullName evidence="1">Fatty acid oxidation complex subunit alpha</fullName>
    </recommendedName>
    <domain>
        <recommendedName>
            <fullName evidence="1">Enoyl-CoA hydratase/3-hydroxybutyryl-CoA epimerase</fullName>
            <ecNumber evidence="1">4.2.1.17</ecNumber>
            <ecNumber evidence="1">5.1.2.3</ecNumber>
        </recommendedName>
    </domain>
    <domain>
        <recommendedName>
            <fullName evidence="1">3-hydroxyacyl-CoA dehydrogenase</fullName>
            <ecNumber evidence="1">1.1.1.35</ecNumber>
        </recommendedName>
    </domain>
</protein>
<comment type="function">
    <text evidence="1">Catalyzes the formation of a hydroxyacyl-CoA by addition of water on enoyl-CoA. Also exhibits 3-hydroxyacyl-CoA epimerase and 3-hydroxyacyl-CoA dehydrogenase activities.</text>
</comment>
<comment type="catalytic activity">
    <reaction evidence="1">
        <text>a (3S)-3-hydroxyacyl-CoA = a (2E)-enoyl-CoA + H2O</text>
        <dbReference type="Rhea" id="RHEA:16105"/>
        <dbReference type="ChEBI" id="CHEBI:15377"/>
        <dbReference type="ChEBI" id="CHEBI:57318"/>
        <dbReference type="ChEBI" id="CHEBI:58856"/>
        <dbReference type="EC" id="4.2.1.17"/>
    </reaction>
</comment>
<comment type="catalytic activity">
    <reaction evidence="1">
        <text>a 4-saturated-(3S)-3-hydroxyacyl-CoA = a (3E)-enoyl-CoA + H2O</text>
        <dbReference type="Rhea" id="RHEA:20724"/>
        <dbReference type="ChEBI" id="CHEBI:15377"/>
        <dbReference type="ChEBI" id="CHEBI:58521"/>
        <dbReference type="ChEBI" id="CHEBI:137480"/>
        <dbReference type="EC" id="4.2.1.17"/>
    </reaction>
</comment>
<comment type="catalytic activity">
    <reaction evidence="1">
        <text>a (3S)-3-hydroxyacyl-CoA + NAD(+) = a 3-oxoacyl-CoA + NADH + H(+)</text>
        <dbReference type="Rhea" id="RHEA:22432"/>
        <dbReference type="ChEBI" id="CHEBI:15378"/>
        <dbReference type="ChEBI" id="CHEBI:57318"/>
        <dbReference type="ChEBI" id="CHEBI:57540"/>
        <dbReference type="ChEBI" id="CHEBI:57945"/>
        <dbReference type="ChEBI" id="CHEBI:90726"/>
        <dbReference type="EC" id="1.1.1.35"/>
    </reaction>
</comment>
<comment type="catalytic activity">
    <reaction evidence="1">
        <text>(3S)-3-hydroxybutanoyl-CoA = (3R)-3-hydroxybutanoyl-CoA</text>
        <dbReference type="Rhea" id="RHEA:21760"/>
        <dbReference type="ChEBI" id="CHEBI:57315"/>
        <dbReference type="ChEBI" id="CHEBI:57316"/>
        <dbReference type="EC" id="5.1.2.3"/>
    </reaction>
</comment>
<comment type="pathway">
    <text evidence="1">Lipid metabolism; fatty acid beta-oxidation.</text>
</comment>
<comment type="subunit">
    <text evidence="1">Heterotetramer of two alpha chains (FadJ) and two beta chains (FadI).</text>
</comment>
<comment type="subcellular location">
    <subcellularLocation>
        <location evidence="1">Cytoplasm</location>
    </subcellularLocation>
</comment>
<comment type="similarity">
    <text evidence="1">In the N-terminal section; belongs to the enoyl-CoA hydratase/isomerase family.</text>
</comment>
<comment type="similarity">
    <text evidence="1">In the central section; belongs to the 3-hydroxyacyl-CoA dehydrogenase family.</text>
</comment>
<comment type="sequence caution" evidence="3">
    <conflict type="erroneous initiation">
        <sequence resource="EMBL-CDS" id="CAH21874"/>
    </conflict>
</comment>
<dbReference type="EC" id="4.2.1.17" evidence="1"/>
<dbReference type="EC" id="5.1.2.3" evidence="1"/>
<dbReference type="EC" id="1.1.1.35" evidence="1"/>
<dbReference type="EMBL" id="BX936398">
    <property type="protein sequence ID" value="CAH21874.1"/>
    <property type="status" value="ALT_INIT"/>
    <property type="molecule type" value="Genomic_DNA"/>
</dbReference>
<dbReference type="RefSeq" id="WP_011192694.1">
    <property type="nucleotide sequence ID" value="NZ_CP009712.1"/>
</dbReference>
<dbReference type="SMR" id="Q668V1"/>
<dbReference type="KEGG" id="yps:YPTB2636"/>
<dbReference type="UniPathway" id="UPA00659"/>
<dbReference type="Proteomes" id="UP000001011">
    <property type="component" value="Chromosome"/>
</dbReference>
<dbReference type="GO" id="GO:0005737">
    <property type="term" value="C:cytoplasm"/>
    <property type="evidence" value="ECO:0007669"/>
    <property type="project" value="UniProtKB-SubCell"/>
</dbReference>
<dbReference type="GO" id="GO:0008692">
    <property type="term" value="F:3-hydroxybutyryl-CoA epimerase activity"/>
    <property type="evidence" value="ECO:0007669"/>
    <property type="project" value="UniProtKB-UniRule"/>
</dbReference>
<dbReference type="GO" id="GO:0004300">
    <property type="term" value="F:enoyl-CoA hydratase activity"/>
    <property type="evidence" value="ECO:0007669"/>
    <property type="project" value="UniProtKB-UniRule"/>
</dbReference>
<dbReference type="GO" id="GO:0016509">
    <property type="term" value="F:long-chain-3-hydroxyacyl-CoA dehydrogenase activity"/>
    <property type="evidence" value="ECO:0007669"/>
    <property type="project" value="TreeGrafter"/>
</dbReference>
<dbReference type="GO" id="GO:0070403">
    <property type="term" value="F:NAD+ binding"/>
    <property type="evidence" value="ECO:0007669"/>
    <property type="project" value="InterPro"/>
</dbReference>
<dbReference type="GO" id="GO:0006635">
    <property type="term" value="P:fatty acid beta-oxidation"/>
    <property type="evidence" value="ECO:0007669"/>
    <property type="project" value="UniProtKB-UniRule"/>
</dbReference>
<dbReference type="CDD" id="cd06558">
    <property type="entry name" value="crotonase-like"/>
    <property type="match status" value="1"/>
</dbReference>
<dbReference type="FunFam" id="1.10.1040.50:FF:000003">
    <property type="entry name" value="Fatty acid oxidation complex subunit alpha"/>
    <property type="match status" value="1"/>
</dbReference>
<dbReference type="FunFam" id="3.90.226.10:FF:000011">
    <property type="entry name" value="Fatty acid oxidation complex subunit alpha"/>
    <property type="match status" value="1"/>
</dbReference>
<dbReference type="FunFam" id="3.40.50.720:FF:000009">
    <property type="entry name" value="Fatty oxidation complex, alpha subunit"/>
    <property type="match status" value="1"/>
</dbReference>
<dbReference type="Gene3D" id="1.10.1040.50">
    <property type="match status" value="1"/>
</dbReference>
<dbReference type="Gene3D" id="3.90.226.10">
    <property type="entry name" value="2-enoyl-CoA Hydratase, Chain A, domain 1"/>
    <property type="match status" value="1"/>
</dbReference>
<dbReference type="Gene3D" id="3.40.50.720">
    <property type="entry name" value="NAD(P)-binding Rossmann-like Domain"/>
    <property type="match status" value="1"/>
</dbReference>
<dbReference type="HAMAP" id="MF_01617">
    <property type="entry name" value="FadJ"/>
    <property type="match status" value="1"/>
</dbReference>
<dbReference type="InterPro" id="IPR006180">
    <property type="entry name" value="3-OHacyl-CoA_DH_CS"/>
</dbReference>
<dbReference type="InterPro" id="IPR006176">
    <property type="entry name" value="3-OHacyl-CoA_DH_NAD-bd"/>
</dbReference>
<dbReference type="InterPro" id="IPR006108">
    <property type="entry name" value="3HC_DH_C"/>
</dbReference>
<dbReference type="InterPro" id="IPR008927">
    <property type="entry name" value="6-PGluconate_DH-like_C_sf"/>
</dbReference>
<dbReference type="InterPro" id="IPR029045">
    <property type="entry name" value="ClpP/crotonase-like_dom_sf"/>
</dbReference>
<dbReference type="InterPro" id="IPR001753">
    <property type="entry name" value="Enoyl-CoA_hydra/iso"/>
</dbReference>
<dbReference type="InterPro" id="IPR050136">
    <property type="entry name" value="FA_oxidation_alpha_subunit"/>
</dbReference>
<dbReference type="InterPro" id="IPR012802">
    <property type="entry name" value="FadJ"/>
</dbReference>
<dbReference type="InterPro" id="IPR036291">
    <property type="entry name" value="NAD(P)-bd_dom_sf"/>
</dbReference>
<dbReference type="NCBIfam" id="TIGR02440">
    <property type="entry name" value="FadJ"/>
    <property type="match status" value="1"/>
</dbReference>
<dbReference type="NCBIfam" id="NF008363">
    <property type="entry name" value="PRK11154.1"/>
    <property type="match status" value="1"/>
</dbReference>
<dbReference type="PANTHER" id="PTHR43612">
    <property type="entry name" value="TRIFUNCTIONAL ENZYME SUBUNIT ALPHA"/>
    <property type="match status" value="1"/>
</dbReference>
<dbReference type="PANTHER" id="PTHR43612:SF3">
    <property type="entry name" value="TRIFUNCTIONAL ENZYME SUBUNIT ALPHA, MITOCHONDRIAL"/>
    <property type="match status" value="1"/>
</dbReference>
<dbReference type="Pfam" id="PF00725">
    <property type="entry name" value="3HCDH"/>
    <property type="match status" value="2"/>
</dbReference>
<dbReference type="Pfam" id="PF02737">
    <property type="entry name" value="3HCDH_N"/>
    <property type="match status" value="1"/>
</dbReference>
<dbReference type="Pfam" id="PF00378">
    <property type="entry name" value="ECH_1"/>
    <property type="match status" value="1"/>
</dbReference>
<dbReference type="SUPFAM" id="SSF48179">
    <property type="entry name" value="6-phosphogluconate dehydrogenase C-terminal domain-like"/>
    <property type="match status" value="2"/>
</dbReference>
<dbReference type="SUPFAM" id="SSF52096">
    <property type="entry name" value="ClpP/crotonase"/>
    <property type="match status" value="1"/>
</dbReference>
<dbReference type="SUPFAM" id="SSF51735">
    <property type="entry name" value="NAD(P)-binding Rossmann-fold domains"/>
    <property type="match status" value="1"/>
</dbReference>
<dbReference type="PROSITE" id="PS00067">
    <property type="entry name" value="3HCDH"/>
    <property type="match status" value="1"/>
</dbReference>
<gene>
    <name evidence="1" type="primary">fadJ</name>
    <name type="ordered locus">YPTB2636</name>
</gene>
<keyword id="KW-0963">Cytoplasm</keyword>
<keyword id="KW-0276">Fatty acid metabolism</keyword>
<keyword id="KW-0413">Isomerase</keyword>
<keyword id="KW-0442">Lipid degradation</keyword>
<keyword id="KW-0443">Lipid metabolism</keyword>
<keyword id="KW-0456">Lyase</keyword>
<keyword id="KW-0511">Multifunctional enzyme</keyword>
<keyword id="KW-0520">NAD</keyword>
<keyword id="KW-0560">Oxidoreductase</keyword>
<accession>Q668V1</accession>
<reference key="1">
    <citation type="journal article" date="2004" name="Proc. Natl. Acad. Sci. U.S.A.">
        <title>Insights into the evolution of Yersinia pestis through whole-genome comparison with Yersinia pseudotuberculosis.</title>
        <authorList>
            <person name="Chain P.S.G."/>
            <person name="Carniel E."/>
            <person name="Larimer F.W."/>
            <person name="Lamerdin J."/>
            <person name="Stoutland P.O."/>
            <person name="Regala W.M."/>
            <person name="Georgescu A.M."/>
            <person name="Vergez L.M."/>
            <person name="Land M.L."/>
            <person name="Motin V.L."/>
            <person name="Brubaker R.R."/>
            <person name="Fowler J."/>
            <person name="Hinnebusch J."/>
            <person name="Marceau M."/>
            <person name="Medigue C."/>
            <person name="Simonet M."/>
            <person name="Chenal-Francisque V."/>
            <person name="Souza B."/>
            <person name="Dacheux D."/>
            <person name="Elliott J.M."/>
            <person name="Derbise A."/>
            <person name="Hauser L.J."/>
            <person name="Garcia E."/>
        </authorList>
    </citation>
    <scope>NUCLEOTIDE SEQUENCE [LARGE SCALE GENOMIC DNA]</scope>
    <source>
        <strain>IP32953</strain>
    </source>
</reference>
<organism>
    <name type="scientific">Yersinia pseudotuberculosis serotype I (strain IP32953)</name>
    <dbReference type="NCBI Taxonomy" id="273123"/>
    <lineage>
        <taxon>Bacteria</taxon>
        <taxon>Pseudomonadati</taxon>
        <taxon>Pseudomonadota</taxon>
        <taxon>Gammaproteobacteria</taxon>
        <taxon>Enterobacterales</taxon>
        <taxon>Yersiniaceae</taxon>
        <taxon>Yersinia</taxon>
    </lineage>
</organism>
<sequence length="753" mass="81350">MGASATNSVTHPAFTLNVRPDNIGIITIDVVGDKVNTLKAEFADQIATILQQAHALPKLQGLVIVSGKPDSFIAGADITMIAACRTAHDARVLAQKGQSILAQIAAFPVPVVAAIHGACLGGGLELALACHSRICSLDDKTVLGLPEVQLGLLPGSGGTQRLPRLVGVSKALDMILTGKQIRPRQALKMGLVDDVVPRDILLDVAIQRAKAGWLNRRALPWQERLLSGPLGKALLFRIVRKKTLAKTRGHYPAAERIIDVVRKGLDQGGPSGYEAEARAFGELAMSPQSAALRSLFFATTSLKKETGSAATARAIHRVGVLGGGLMGGGIANVTATRAGLPVRIKDINPQGINQALKYTWDALGKRVRSKRMRPTEQQRQMMLISGSTDYRGFERVDIVVEAVFEDLSLKQQMVADIERFGAAHTIFASNTSSLPISQIAALAQRPEQVIGLHYFSPVDKMPLVEVIPHEKTSEETIATTVALARKQGKTAIVVADRAGFYVNRILAPYINEAARCLLDGEPIESVDNALVDFGFPVGPMMLLDEVGIDVATKIMPILVEQLGPRFAAPPSFDVILKDGRKGRKNGRGFYLYSNPTLHSNSTKNSSPTKNGNSPAKRNSFKWRKNKVKPVDSSIYTLLGVTPKAHLGAGVITQRCTMLMLNEAVRCLDESIIRNPRDGDIGAVFGIGFPPFLGGPFRYLDSLGADKVVQALRLLVQQYGERFEPCQRLVTMAEQQQQFYPVDANIDEVTDVAS</sequence>
<proteinExistence type="inferred from homology"/>